<feature type="chain" id="PRO_0000134561" description="Orotidine 5'-phosphate decarboxylase">
    <location>
        <begin position="1"/>
        <end position="248"/>
    </location>
</feature>
<feature type="active site" description="Proton donor" evidence="1">
    <location>
        <position position="73"/>
    </location>
</feature>
<feature type="binding site" evidence="1">
    <location>
        <position position="22"/>
    </location>
    <ligand>
        <name>substrate</name>
    </ligand>
</feature>
<feature type="binding site" evidence="1">
    <location>
        <position position="44"/>
    </location>
    <ligand>
        <name>substrate</name>
    </ligand>
</feature>
<feature type="binding site" evidence="1">
    <location>
        <begin position="71"/>
        <end position="80"/>
    </location>
    <ligand>
        <name>substrate</name>
    </ligand>
</feature>
<feature type="binding site" evidence="1">
    <location>
        <position position="131"/>
    </location>
    <ligand>
        <name>substrate</name>
    </ligand>
</feature>
<feature type="binding site" evidence="1">
    <location>
        <position position="192"/>
    </location>
    <ligand>
        <name>substrate</name>
    </ligand>
</feature>
<feature type="binding site" evidence="1">
    <location>
        <position position="201"/>
    </location>
    <ligand>
        <name>substrate</name>
    </ligand>
</feature>
<feature type="binding site" evidence="1">
    <location>
        <position position="221"/>
    </location>
    <ligand>
        <name>substrate</name>
    </ligand>
</feature>
<feature type="binding site" evidence="1">
    <location>
        <position position="222"/>
    </location>
    <ligand>
        <name>substrate</name>
    </ligand>
</feature>
<protein>
    <recommendedName>
        <fullName evidence="1">Orotidine 5'-phosphate decarboxylase</fullName>
        <ecNumber evidence="1">4.1.1.23</ecNumber>
    </recommendedName>
    <alternativeName>
        <fullName evidence="1">OMP decarboxylase</fullName>
        <shortName evidence="1">OMPDCase</shortName>
        <shortName evidence="1">OMPdecase</shortName>
    </alternativeName>
</protein>
<gene>
    <name evidence="1" type="primary">pyrF</name>
    <name type="ordered locus">plu2427</name>
</gene>
<accession>Q7N4C1</accession>
<proteinExistence type="inferred from homology"/>
<organism>
    <name type="scientific">Photorhabdus laumondii subsp. laumondii (strain DSM 15139 / CIP 105565 / TT01)</name>
    <name type="common">Photorhabdus luminescens subsp. laumondii</name>
    <dbReference type="NCBI Taxonomy" id="243265"/>
    <lineage>
        <taxon>Bacteria</taxon>
        <taxon>Pseudomonadati</taxon>
        <taxon>Pseudomonadota</taxon>
        <taxon>Gammaproteobacteria</taxon>
        <taxon>Enterobacterales</taxon>
        <taxon>Morganellaceae</taxon>
        <taxon>Photorhabdus</taxon>
    </lineage>
</organism>
<evidence type="ECO:0000255" key="1">
    <source>
        <dbReference type="HAMAP-Rule" id="MF_01200"/>
    </source>
</evidence>
<name>PYRF_PHOLL</name>
<keyword id="KW-0210">Decarboxylase</keyword>
<keyword id="KW-0456">Lyase</keyword>
<keyword id="KW-0665">Pyrimidine biosynthesis</keyword>
<keyword id="KW-1185">Reference proteome</keyword>
<dbReference type="EC" id="4.1.1.23" evidence="1"/>
<dbReference type="EMBL" id="BX571867">
    <property type="protein sequence ID" value="CAE14801.1"/>
    <property type="molecule type" value="Genomic_DNA"/>
</dbReference>
<dbReference type="RefSeq" id="WP_011146655.1">
    <property type="nucleotide sequence ID" value="NC_005126.1"/>
</dbReference>
<dbReference type="SMR" id="Q7N4C1"/>
<dbReference type="STRING" id="243265.plu2427"/>
<dbReference type="GeneID" id="48848695"/>
<dbReference type="KEGG" id="plu:plu2427"/>
<dbReference type="eggNOG" id="COG0284">
    <property type="taxonomic scope" value="Bacteria"/>
</dbReference>
<dbReference type="HOGENOM" id="CLU_067069_0_0_6"/>
<dbReference type="OrthoDB" id="9806203at2"/>
<dbReference type="UniPathway" id="UPA00070">
    <property type="reaction ID" value="UER00120"/>
</dbReference>
<dbReference type="Proteomes" id="UP000002514">
    <property type="component" value="Chromosome"/>
</dbReference>
<dbReference type="GO" id="GO:0005829">
    <property type="term" value="C:cytosol"/>
    <property type="evidence" value="ECO:0007669"/>
    <property type="project" value="TreeGrafter"/>
</dbReference>
<dbReference type="GO" id="GO:0004590">
    <property type="term" value="F:orotidine-5'-phosphate decarboxylase activity"/>
    <property type="evidence" value="ECO:0007669"/>
    <property type="project" value="UniProtKB-UniRule"/>
</dbReference>
<dbReference type="GO" id="GO:0006207">
    <property type="term" value="P:'de novo' pyrimidine nucleobase biosynthetic process"/>
    <property type="evidence" value="ECO:0007669"/>
    <property type="project" value="InterPro"/>
</dbReference>
<dbReference type="GO" id="GO:0044205">
    <property type="term" value="P:'de novo' UMP biosynthetic process"/>
    <property type="evidence" value="ECO:0007669"/>
    <property type="project" value="UniProtKB-UniRule"/>
</dbReference>
<dbReference type="CDD" id="cd04725">
    <property type="entry name" value="OMP_decarboxylase_like"/>
    <property type="match status" value="1"/>
</dbReference>
<dbReference type="FunFam" id="3.20.20.70:FF:000015">
    <property type="entry name" value="Orotidine 5'-phosphate decarboxylase"/>
    <property type="match status" value="1"/>
</dbReference>
<dbReference type="Gene3D" id="3.20.20.70">
    <property type="entry name" value="Aldolase class I"/>
    <property type="match status" value="1"/>
</dbReference>
<dbReference type="HAMAP" id="MF_01200_B">
    <property type="entry name" value="OMPdecase_type1_B"/>
    <property type="match status" value="1"/>
</dbReference>
<dbReference type="InterPro" id="IPR013785">
    <property type="entry name" value="Aldolase_TIM"/>
</dbReference>
<dbReference type="InterPro" id="IPR014732">
    <property type="entry name" value="OMPdecase"/>
</dbReference>
<dbReference type="InterPro" id="IPR018089">
    <property type="entry name" value="OMPdecase_AS"/>
</dbReference>
<dbReference type="InterPro" id="IPR047596">
    <property type="entry name" value="OMPdecase_bac"/>
</dbReference>
<dbReference type="InterPro" id="IPR001754">
    <property type="entry name" value="OMPdeCOase_dom"/>
</dbReference>
<dbReference type="InterPro" id="IPR011060">
    <property type="entry name" value="RibuloseP-bd_barrel"/>
</dbReference>
<dbReference type="NCBIfam" id="NF001273">
    <property type="entry name" value="PRK00230.1"/>
    <property type="match status" value="1"/>
</dbReference>
<dbReference type="NCBIfam" id="TIGR01740">
    <property type="entry name" value="pyrF"/>
    <property type="match status" value="1"/>
</dbReference>
<dbReference type="PANTHER" id="PTHR32119">
    <property type="entry name" value="OROTIDINE 5'-PHOSPHATE DECARBOXYLASE"/>
    <property type="match status" value="1"/>
</dbReference>
<dbReference type="PANTHER" id="PTHR32119:SF2">
    <property type="entry name" value="OROTIDINE 5'-PHOSPHATE DECARBOXYLASE"/>
    <property type="match status" value="1"/>
</dbReference>
<dbReference type="Pfam" id="PF00215">
    <property type="entry name" value="OMPdecase"/>
    <property type="match status" value="1"/>
</dbReference>
<dbReference type="SMART" id="SM00934">
    <property type="entry name" value="OMPdecase"/>
    <property type="match status" value="1"/>
</dbReference>
<dbReference type="SUPFAM" id="SSF51366">
    <property type="entry name" value="Ribulose-phoshate binding barrel"/>
    <property type="match status" value="1"/>
</dbReference>
<dbReference type="PROSITE" id="PS00156">
    <property type="entry name" value="OMPDECASE"/>
    <property type="match status" value="1"/>
</dbReference>
<sequence>MTSHTLTSFGRQISSPVIVALDYDNQDTALAFADKIDPQDCRLKVGKEMFTLHGPQFVKLLHQRGFEVFLDLKFHDIPNTTARAVAAAAEMGVWMVNVHASGGTRMMTAAKEALLPYGHDAPLLIAVTVLTSMEQSDLQGIGIDMTPAQQAERLAKLTQACGLDGVVCSAHEAQQLKKVCGQHFQLVTPGIRPTGSDVGDQRRIMTPEQAVLAGVDYMVIGRPITRAADPAAALRQINQSIAGVINAR</sequence>
<reference key="1">
    <citation type="journal article" date="2003" name="Nat. Biotechnol.">
        <title>The genome sequence of the entomopathogenic bacterium Photorhabdus luminescens.</title>
        <authorList>
            <person name="Duchaud E."/>
            <person name="Rusniok C."/>
            <person name="Frangeul L."/>
            <person name="Buchrieser C."/>
            <person name="Givaudan A."/>
            <person name="Taourit S."/>
            <person name="Bocs S."/>
            <person name="Boursaux-Eude C."/>
            <person name="Chandler M."/>
            <person name="Charles J.-F."/>
            <person name="Dassa E."/>
            <person name="Derose R."/>
            <person name="Derzelle S."/>
            <person name="Freyssinet G."/>
            <person name="Gaudriault S."/>
            <person name="Medigue C."/>
            <person name="Lanois A."/>
            <person name="Powell K."/>
            <person name="Siguier P."/>
            <person name="Vincent R."/>
            <person name="Wingate V."/>
            <person name="Zouine M."/>
            <person name="Glaser P."/>
            <person name="Boemare N."/>
            <person name="Danchin A."/>
            <person name="Kunst F."/>
        </authorList>
    </citation>
    <scope>NUCLEOTIDE SEQUENCE [LARGE SCALE GENOMIC DNA]</scope>
    <source>
        <strain>DSM 15139 / CIP 105565 / TT01</strain>
    </source>
</reference>
<comment type="function">
    <text evidence="1">Catalyzes the decarboxylation of orotidine 5'-monophosphate (OMP) to uridine 5'-monophosphate (UMP).</text>
</comment>
<comment type="catalytic activity">
    <reaction evidence="1">
        <text>orotidine 5'-phosphate + H(+) = UMP + CO2</text>
        <dbReference type="Rhea" id="RHEA:11596"/>
        <dbReference type="ChEBI" id="CHEBI:15378"/>
        <dbReference type="ChEBI" id="CHEBI:16526"/>
        <dbReference type="ChEBI" id="CHEBI:57538"/>
        <dbReference type="ChEBI" id="CHEBI:57865"/>
        <dbReference type="EC" id="4.1.1.23"/>
    </reaction>
</comment>
<comment type="pathway">
    <text evidence="1">Pyrimidine metabolism; UMP biosynthesis via de novo pathway; UMP from orotate: step 2/2.</text>
</comment>
<comment type="subunit">
    <text evidence="1">Homodimer.</text>
</comment>
<comment type="similarity">
    <text evidence="1">Belongs to the OMP decarboxylase family. Type 1 subfamily.</text>
</comment>